<dbReference type="EC" id="4.3.3.6" evidence="1"/>
<dbReference type="EC" id="3.5.1.2" evidence="1"/>
<dbReference type="EMBL" id="BA000017">
    <property type="protein sequence ID" value="BAB56682.1"/>
    <property type="molecule type" value="Genomic_DNA"/>
</dbReference>
<dbReference type="RefSeq" id="WP_000690439.1">
    <property type="nucleotide sequence ID" value="NC_002758.2"/>
</dbReference>
<dbReference type="SMR" id="Q99W83"/>
<dbReference type="KEGG" id="sav:SAV0520"/>
<dbReference type="HOGENOM" id="CLU_069674_2_0_9"/>
<dbReference type="PhylomeDB" id="Q99W83"/>
<dbReference type="UniPathway" id="UPA00245"/>
<dbReference type="Proteomes" id="UP000002481">
    <property type="component" value="Chromosome"/>
</dbReference>
<dbReference type="GO" id="GO:0005829">
    <property type="term" value="C:cytosol"/>
    <property type="evidence" value="ECO:0007669"/>
    <property type="project" value="TreeGrafter"/>
</dbReference>
<dbReference type="GO" id="GO:1903600">
    <property type="term" value="C:glutaminase complex"/>
    <property type="evidence" value="ECO:0007669"/>
    <property type="project" value="TreeGrafter"/>
</dbReference>
<dbReference type="GO" id="GO:0004359">
    <property type="term" value="F:glutaminase activity"/>
    <property type="evidence" value="ECO:0007669"/>
    <property type="project" value="UniProtKB-UniRule"/>
</dbReference>
<dbReference type="GO" id="GO:0036381">
    <property type="term" value="F:pyridoxal 5'-phosphate synthase (glutamine hydrolysing) activity"/>
    <property type="evidence" value="ECO:0007669"/>
    <property type="project" value="UniProtKB-UniRule"/>
</dbReference>
<dbReference type="GO" id="GO:0006543">
    <property type="term" value="P:glutamine catabolic process"/>
    <property type="evidence" value="ECO:0007669"/>
    <property type="project" value="UniProtKB-UniRule"/>
</dbReference>
<dbReference type="GO" id="GO:0042823">
    <property type="term" value="P:pyridoxal phosphate biosynthetic process"/>
    <property type="evidence" value="ECO:0007669"/>
    <property type="project" value="UniProtKB-UniRule"/>
</dbReference>
<dbReference type="GO" id="GO:0008614">
    <property type="term" value="P:pyridoxine metabolic process"/>
    <property type="evidence" value="ECO:0007669"/>
    <property type="project" value="TreeGrafter"/>
</dbReference>
<dbReference type="CDD" id="cd01749">
    <property type="entry name" value="GATase1_PB"/>
    <property type="match status" value="1"/>
</dbReference>
<dbReference type="FunFam" id="3.40.50.880:FF:000010">
    <property type="entry name" value="uncharacterized protein LOC100176842 isoform X2"/>
    <property type="match status" value="1"/>
</dbReference>
<dbReference type="Gene3D" id="3.40.50.880">
    <property type="match status" value="1"/>
</dbReference>
<dbReference type="HAMAP" id="MF_01615">
    <property type="entry name" value="PdxT"/>
    <property type="match status" value="1"/>
</dbReference>
<dbReference type="InterPro" id="IPR029062">
    <property type="entry name" value="Class_I_gatase-like"/>
</dbReference>
<dbReference type="InterPro" id="IPR002161">
    <property type="entry name" value="PdxT/SNO"/>
</dbReference>
<dbReference type="InterPro" id="IPR021196">
    <property type="entry name" value="PdxT/SNO_CS"/>
</dbReference>
<dbReference type="NCBIfam" id="TIGR03800">
    <property type="entry name" value="PLP_synth_Pdx2"/>
    <property type="match status" value="1"/>
</dbReference>
<dbReference type="PANTHER" id="PTHR31559">
    <property type="entry name" value="PYRIDOXAL 5'-PHOSPHATE SYNTHASE SUBUNIT SNO"/>
    <property type="match status" value="1"/>
</dbReference>
<dbReference type="PANTHER" id="PTHR31559:SF0">
    <property type="entry name" value="PYRIDOXAL 5'-PHOSPHATE SYNTHASE SUBUNIT SNO1-RELATED"/>
    <property type="match status" value="1"/>
</dbReference>
<dbReference type="Pfam" id="PF01174">
    <property type="entry name" value="SNO"/>
    <property type="match status" value="1"/>
</dbReference>
<dbReference type="PIRSF" id="PIRSF005639">
    <property type="entry name" value="Glut_amidoT_SNO"/>
    <property type="match status" value="1"/>
</dbReference>
<dbReference type="SUPFAM" id="SSF52317">
    <property type="entry name" value="Class I glutamine amidotransferase-like"/>
    <property type="match status" value="1"/>
</dbReference>
<dbReference type="PROSITE" id="PS01236">
    <property type="entry name" value="PDXT_SNO_1"/>
    <property type="match status" value="1"/>
</dbReference>
<dbReference type="PROSITE" id="PS51130">
    <property type="entry name" value="PDXT_SNO_2"/>
    <property type="match status" value="1"/>
</dbReference>
<evidence type="ECO:0000255" key="1">
    <source>
        <dbReference type="HAMAP-Rule" id="MF_01615"/>
    </source>
</evidence>
<gene>
    <name evidence="1" type="primary">pdxT</name>
    <name type="ordered locus">SAV0520</name>
</gene>
<protein>
    <recommendedName>
        <fullName evidence="1">Pyridoxal 5'-phosphate synthase subunit PdxT</fullName>
        <ecNumber evidence="1">4.3.3.6</ecNumber>
    </recommendedName>
    <alternativeName>
        <fullName evidence="1">Pdx2</fullName>
    </alternativeName>
    <alternativeName>
        <fullName evidence="1">Pyridoxal 5'-phosphate synthase glutaminase subunit</fullName>
        <ecNumber evidence="1">3.5.1.2</ecNumber>
    </alternativeName>
</protein>
<proteinExistence type="inferred from homology"/>
<feature type="chain" id="PRO_0000135656" description="Pyridoxal 5'-phosphate synthase subunit PdxT">
    <location>
        <begin position="1"/>
        <end position="186"/>
    </location>
</feature>
<feature type="active site" description="Nucleophile" evidence="1">
    <location>
        <position position="75"/>
    </location>
</feature>
<feature type="active site" description="Charge relay system" evidence="1">
    <location>
        <position position="165"/>
    </location>
</feature>
<feature type="active site" description="Charge relay system" evidence="1">
    <location>
        <position position="167"/>
    </location>
</feature>
<feature type="binding site" evidence="1">
    <location>
        <begin position="46"/>
        <end position="48"/>
    </location>
    <ligand>
        <name>L-glutamine</name>
        <dbReference type="ChEBI" id="CHEBI:58359"/>
    </ligand>
</feature>
<feature type="binding site" evidence="1">
    <location>
        <position position="101"/>
    </location>
    <ligand>
        <name>L-glutamine</name>
        <dbReference type="ChEBI" id="CHEBI:58359"/>
    </ligand>
</feature>
<feature type="binding site" evidence="1">
    <location>
        <begin position="129"/>
        <end position="130"/>
    </location>
    <ligand>
        <name>L-glutamine</name>
        <dbReference type="ChEBI" id="CHEBI:58359"/>
    </ligand>
</feature>
<comment type="function">
    <text evidence="1">Catalyzes the hydrolysis of glutamine to glutamate and ammonia as part of the biosynthesis of pyridoxal 5'-phosphate. The resulting ammonia molecule is channeled to the active site of PdxS.</text>
</comment>
<comment type="catalytic activity">
    <reaction evidence="1">
        <text>aldehydo-D-ribose 5-phosphate + D-glyceraldehyde 3-phosphate + L-glutamine = pyridoxal 5'-phosphate + L-glutamate + phosphate + 3 H2O + H(+)</text>
        <dbReference type="Rhea" id="RHEA:31507"/>
        <dbReference type="ChEBI" id="CHEBI:15377"/>
        <dbReference type="ChEBI" id="CHEBI:15378"/>
        <dbReference type="ChEBI" id="CHEBI:29985"/>
        <dbReference type="ChEBI" id="CHEBI:43474"/>
        <dbReference type="ChEBI" id="CHEBI:58273"/>
        <dbReference type="ChEBI" id="CHEBI:58359"/>
        <dbReference type="ChEBI" id="CHEBI:59776"/>
        <dbReference type="ChEBI" id="CHEBI:597326"/>
        <dbReference type="EC" id="4.3.3.6"/>
    </reaction>
</comment>
<comment type="catalytic activity">
    <reaction evidence="1">
        <text>L-glutamine + H2O = L-glutamate + NH4(+)</text>
        <dbReference type="Rhea" id="RHEA:15889"/>
        <dbReference type="ChEBI" id="CHEBI:15377"/>
        <dbReference type="ChEBI" id="CHEBI:28938"/>
        <dbReference type="ChEBI" id="CHEBI:29985"/>
        <dbReference type="ChEBI" id="CHEBI:58359"/>
        <dbReference type="EC" id="3.5.1.2"/>
    </reaction>
</comment>
<comment type="pathway">
    <text evidence="1">Cofactor biosynthesis; pyridoxal 5'-phosphate biosynthesis.</text>
</comment>
<comment type="subunit">
    <text evidence="1">In the presence of PdxS, forms a dodecamer of heterodimers. Only shows activity in the heterodimer.</text>
</comment>
<comment type="similarity">
    <text evidence="1">Belongs to the glutaminase PdxT/SNO family.</text>
</comment>
<name>PDXT_STAAM</name>
<accession>Q99W83</accession>
<sequence length="186" mass="20630">MKIGVLALQGAVREHIRHIELSGHEGIAVKKVEQLEEIEGLILPGGESTTLRRLMNLYGFKEALQNSTLPMFGTCAGLIVLAQDIVGEEGYLNKLNITVQRNSFGRQVDSFETELDIKGIATDIEGVFIRAPHIEKVGQGVDILCKVNEKIVAVQQGKYLGVSFHPELTDDYRVTDYFINHIVKKA</sequence>
<reference key="1">
    <citation type="journal article" date="2001" name="Lancet">
        <title>Whole genome sequencing of meticillin-resistant Staphylococcus aureus.</title>
        <authorList>
            <person name="Kuroda M."/>
            <person name="Ohta T."/>
            <person name="Uchiyama I."/>
            <person name="Baba T."/>
            <person name="Yuzawa H."/>
            <person name="Kobayashi I."/>
            <person name="Cui L."/>
            <person name="Oguchi A."/>
            <person name="Aoki K."/>
            <person name="Nagai Y."/>
            <person name="Lian J.-Q."/>
            <person name="Ito T."/>
            <person name="Kanamori M."/>
            <person name="Matsumaru H."/>
            <person name="Maruyama A."/>
            <person name="Murakami H."/>
            <person name="Hosoyama A."/>
            <person name="Mizutani-Ui Y."/>
            <person name="Takahashi N.K."/>
            <person name="Sawano T."/>
            <person name="Inoue R."/>
            <person name="Kaito C."/>
            <person name="Sekimizu K."/>
            <person name="Hirakawa H."/>
            <person name="Kuhara S."/>
            <person name="Goto S."/>
            <person name="Yabuzaki J."/>
            <person name="Kanehisa M."/>
            <person name="Yamashita A."/>
            <person name="Oshima K."/>
            <person name="Furuya K."/>
            <person name="Yoshino C."/>
            <person name="Shiba T."/>
            <person name="Hattori M."/>
            <person name="Ogasawara N."/>
            <person name="Hayashi H."/>
            <person name="Hiramatsu K."/>
        </authorList>
    </citation>
    <scope>NUCLEOTIDE SEQUENCE [LARGE SCALE GENOMIC DNA]</scope>
    <source>
        <strain>Mu50 / ATCC 700699</strain>
    </source>
</reference>
<organism>
    <name type="scientific">Staphylococcus aureus (strain Mu50 / ATCC 700699)</name>
    <dbReference type="NCBI Taxonomy" id="158878"/>
    <lineage>
        <taxon>Bacteria</taxon>
        <taxon>Bacillati</taxon>
        <taxon>Bacillota</taxon>
        <taxon>Bacilli</taxon>
        <taxon>Bacillales</taxon>
        <taxon>Staphylococcaceae</taxon>
        <taxon>Staphylococcus</taxon>
    </lineage>
</organism>
<keyword id="KW-0315">Glutamine amidotransferase</keyword>
<keyword id="KW-0378">Hydrolase</keyword>
<keyword id="KW-0456">Lyase</keyword>
<keyword id="KW-0663">Pyridoxal phosphate</keyword>